<keyword id="KW-1185">Reference proteome</keyword>
<keyword id="KW-0687">Ribonucleoprotein</keyword>
<keyword id="KW-0689">Ribosomal protein</keyword>
<reference key="1">
    <citation type="submission" date="2006-03" db="EMBL/GenBank/DDBJ databases">
        <title>Complete genome sequence of Francisella tularensis LVS (Live Vaccine Strain).</title>
        <authorList>
            <person name="Chain P."/>
            <person name="Larimer F."/>
            <person name="Land M."/>
            <person name="Stilwagen S."/>
            <person name="Larsson P."/>
            <person name="Bearden S."/>
            <person name="Chu M."/>
            <person name="Oyston P."/>
            <person name="Forsman M."/>
            <person name="Andersson S."/>
            <person name="Lindler L."/>
            <person name="Titball R."/>
            <person name="Garcia E."/>
        </authorList>
    </citation>
    <scope>NUCLEOTIDE SEQUENCE [LARGE SCALE GENOMIC DNA]</scope>
    <source>
        <strain>LVS</strain>
    </source>
</reference>
<protein>
    <recommendedName>
        <fullName evidence="1">Large ribosomal subunit protein uL30</fullName>
    </recommendedName>
    <alternativeName>
        <fullName evidence="2">50S ribosomal protein L30</fullName>
    </alternativeName>
</protein>
<organism>
    <name type="scientific">Francisella tularensis subsp. holarctica (strain LVS)</name>
    <dbReference type="NCBI Taxonomy" id="376619"/>
    <lineage>
        <taxon>Bacteria</taxon>
        <taxon>Pseudomonadati</taxon>
        <taxon>Pseudomonadota</taxon>
        <taxon>Gammaproteobacteria</taxon>
        <taxon>Thiotrichales</taxon>
        <taxon>Francisellaceae</taxon>
        <taxon>Francisella</taxon>
    </lineage>
</organism>
<gene>
    <name evidence="1" type="primary">rpmD</name>
    <name type="ordered locus">FTL_0254</name>
</gene>
<comment type="subunit">
    <text evidence="1">Part of the 50S ribosomal subunit.</text>
</comment>
<comment type="similarity">
    <text evidence="1">Belongs to the universal ribosomal protein uL30 family.</text>
</comment>
<dbReference type="EMBL" id="AM233362">
    <property type="protein sequence ID" value="CAJ78695.1"/>
    <property type="molecule type" value="Genomic_DNA"/>
</dbReference>
<dbReference type="RefSeq" id="WP_003014363.1">
    <property type="nucleotide sequence ID" value="NZ_CP009694.1"/>
</dbReference>
<dbReference type="SMR" id="Q2A5F2"/>
<dbReference type="GeneID" id="75264243"/>
<dbReference type="KEGG" id="ftl:FTL_0254"/>
<dbReference type="Proteomes" id="UP000001944">
    <property type="component" value="Chromosome"/>
</dbReference>
<dbReference type="GO" id="GO:0022625">
    <property type="term" value="C:cytosolic large ribosomal subunit"/>
    <property type="evidence" value="ECO:0007669"/>
    <property type="project" value="TreeGrafter"/>
</dbReference>
<dbReference type="GO" id="GO:0003735">
    <property type="term" value="F:structural constituent of ribosome"/>
    <property type="evidence" value="ECO:0007669"/>
    <property type="project" value="InterPro"/>
</dbReference>
<dbReference type="GO" id="GO:0006412">
    <property type="term" value="P:translation"/>
    <property type="evidence" value="ECO:0007669"/>
    <property type="project" value="UniProtKB-UniRule"/>
</dbReference>
<dbReference type="CDD" id="cd01658">
    <property type="entry name" value="Ribosomal_L30"/>
    <property type="match status" value="1"/>
</dbReference>
<dbReference type="FunFam" id="3.30.1390.20:FF:000001">
    <property type="entry name" value="50S ribosomal protein L30"/>
    <property type="match status" value="1"/>
</dbReference>
<dbReference type="Gene3D" id="3.30.1390.20">
    <property type="entry name" value="Ribosomal protein L30, ferredoxin-like fold domain"/>
    <property type="match status" value="1"/>
</dbReference>
<dbReference type="HAMAP" id="MF_01371_B">
    <property type="entry name" value="Ribosomal_uL30_B"/>
    <property type="match status" value="1"/>
</dbReference>
<dbReference type="InterPro" id="IPR036919">
    <property type="entry name" value="Ribo_uL30_ferredoxin-like_sf"/>
</dbReference>
<dbReference type="InterPro" id="IPR005996">
    <property type="entry name" value="Ribosomal_uL30_bac-type"/>
</dbReference>
<dbReference type="InterPro" id="IPR016082">
    <property type="entry name" value="Ribosomal_uL30_ferredoxin-like"/>
</dbReference>
<dbReference type="NCBIfam" id="TIGR01308">
    <property type="entry name" value="rpmD_bact"/>
    <property type="match status" value="1"/>
</dbReference>
<dbReference type="PANTHER" id="PTHR15892:SF2">
    <property type="entry name" value="LARGE RIBOSOMAL SUBUNIT PROTEIN UL30M"/>
    <property type="match status" value="1"/>
</dbReference>
<dbReference type="PANTHER" id="PTHR15892">
    <property type="entry name" value="MITOCHONDRIAL RIBOSOMAL PROTEIN L30"/>
    <property type="match status" value="1"/>
</dbReference>
<dbReference type="Pfam" id="PF00327">
    <property type="entry name" value="Ribosomal_L30"/>
    <property type="match status" value="1"/>
</dbReference>
<dbReference type="PIRSF" id="PIRSF002211">
    <property type="entry name" value="Ribosomal_L30_bac-type"/>
    <property type="match status" value="1"/>
</dbReference>
<dbReference type="SUPFAM" id="SSF55129">
    <property type="entry name" value="Ribosomal protein L30p/L7e"/>
    <property type="match status" value="1"/>
</dbReference>
<evidence type="ECO:0000255" key="1">
    <source>
        <dbReference type="HAMAP-Rule" id="MF_01371"/>
    </source>
</evidence>
<evidence type="ECO:0000305" key="2"/>
<accession>Q2A5F2</accession>
<proteinExistence type="inferred from homology"/>
<feature type="chain" id="PRO_0000273786" description="Large ribosomal subunit protein uL30">
    <location>
        <begin position="1"/>
        <end position="61"/>
    </location>
</feature>
<name>RL30_FRATH</name>
<sequence length="61" mass="6871">MTQAKTFKVTLVKSLIGRKENHIASARGLGLRKINHTVEVLDTPENRGMANKIYYMVKIEG</sequence>